<gene>
    <name type="primary">Fev</name>
    <name type="synonym">Pet1</name>
</gene>
<feature type="chain" id="PRO_0000344206" description="Protein FEV">
    <location>
        <begin position="1"/>
        <end position="237"/>
    </location>
</feature>
<feature type="DNA-binding region" description="ETS" evidence="2">
    <location>
        <begin position="47"/>
        <end position="127"/>
    </location>
</feature>
<feature type="region of interest" description="May mediate active transcriptional repression" evidence="1">
    <location>
        <begin position="129"/>
        <end position="237"/>
    </location>
</feature>
<sequence length="237" mass="24991">MRQSGTSQPLLINMYLPDPVGDGLFKEGKSPSWGPLSPAVQKGSGQIQLWQFLLELLADRANAGCIAWEGGHGEFKLTDPDEVARRWGERKSKPNMNYDKLSRALRYYYDKNIMSKVHGKRYAYRFDFQGLAQACQPPPAHAHAAAAAAAAAAAAQDGALYKLPAGLAPLPFPGLSKLNLMAASAGVAPAGFSYWPGPNATAAAAATAALYPTPGLQPPPGPFGAVAAASHLGGHYH</sequence>
<protein>
    <recommendedName>
        <fullName>Protein FEV</fullName>
    </recommendedName>
    <alternativeName>
        <fullName>PC12 ETS domain-containing transcription factor 1</fullName>
        <shortName>PC12 ETS factor 1</shortName>
        <shortName>Pet-1</shortName>
    </alternativeName>
</protein>
<name>FEV_RAT</name>
<organism>
    <name type="scientific">Rattus norvegicus</name>
    <name type="common">Rat</name>
    <dbReference type="NCBI Taxonomy" id="10116"/>
    <lineage>
        <taxon>Eukaryota</taxon>
        <taxon>Metazoa</taxon>
        <taxon>Chordata</taxon>
        <taxon>Craniata</taxon>
        <taxon>Vertebrata</taxon>
        <taxon>Euteleostomi</taxon>
        <taxon>Mammalia</taxon>
        <taxon>Eutheria</taxon>
        <taxon>Euarchontoglires</taxon>
        <taxon>Glires</taxon>
        <taxon>Rodentia</taxon>
        <taxon>Myomorpha</taxon>
        <taxon>Muroidea</taxon>
        <taxon>Muridae</taxon>
        <taxon>Murinae</taxon>
        <taxon>Rattus</taxon>
    </lineage>
</organism>
<evidence type="ECO:0000250" key="1"/>
<evidence type="ECO:0000255" key="2">
    <source>
        <dbReference type="PROSITE-ProRule" id="PRU00237"/>
    </source>
</evidence>
<evidence type="ECO:0000269" key="3">
    <source>
    </source>
</evidence>
<evidence type="ECO:0000269" key="4">
    <source>
    </source>
</evidence>
<evidence type="ECO:0000305" key="5"/>
<proteinExistence type="evidence at transcript level"/>
<accession>O70132</accession>
<dbReference type="EMBL" id="U91679">
    <property type="protein sequence ID" value="AAC12859.1"/>
    <property type="status" value="ALT_SEQ"/>
    <property type="molecule type" value="mRNA"/>
</dbReference>
<dbReference type="RefSeq" id="NP_653354.2">
    <property type="nucleotide sequence ID" value="NM_144753.2"/>
</dbReference>
<dbReference type="SMR" id="O70132"/>
<dbReference type="FunCoup" id="O70132">
    <property type="interactions" value="7"/>
</dbReference>
<dbReference type="STRING" id="10116.ENSRNOP00000024190"/>
<dbReference type="GlyGen" id="O70132">
    <property type="glycosylation" value="1 site"/>
</dbReference>
<dbReference type="PhosphoSitePlus" id="O70132"/>
<dbReference type="PaxDb" id="10116-ENSRNOP00000024190"/>
<dbReference type="Ensembl" id="ENSRNOT00000024190.6">
    <property type="protein sequence ID" value="ENSRNOP00000024190.5"/>
    <property type="gene ID" value="ENSRNOG00000017856.6"/>
</dbReference>
<dbReference type="GeneID" id="246271"/>
<dbReference type="KEGG" id="rno:246271"/>
<dbReference type="UCSC" id="RGD:628860">
    <property type="organism name" value="rat"/>
</dbReference>
<dbReference type="AGR" id="RGD:628860"/>
<dbReference type="CTD" id="54738"/>
<dbReference type="RGD" id="628860">
    <property type="gene designation" value="Fev"/>
</dbReference>
<dbReference type="eggNOG" id="KOG3806">
    <property type="taxonomic scope" value="Eukaryota"/>
</dbReference>
<dbReference type="GeneTree" id="ENSGT00940000161562"/>
<dbReference type="HOGENOM" id="CLU_045216_4_0_1"/>
<dbReference type="InParanoid" id="O70132"/>
<dbReference type="OMA" id="GFSYWAG"/>
<dbReference type="OrthoDB" id="10067219at2759"/>
<dbReference type="PhylomeDB" id="O70132"/>
<dbReference type="TreeFam" id="TF316214"/>
<dbReference type="PRO" id="PR:O70132"/>
<dbReference type="Proteomes" id="UP000002494">
    <property type="component" value="Chromosome 9"/>
</dbReference>
<dbReference type="GO" id="GO:0016607">
    <property type="term" value="C:nuclear speck"/>
    <property type="evidence" value="ECO:0007669"/>
    <property type="project" value="Ensembl"/>
</dbReference>
<dbReference type="GO" id="GO:0005634">
    <property type="term" value="C:nucleus"/>
    <property type="evidence" value="ECO:0000266"/>
    <property type="project" value="RGD"/>
</dbReference>
<dbReference type="GO" id="GO:0001228">
    <property type="term" value="F:DNA-binding transcription activator activity, RNA polymerase II-specific"/>
    <property type="evidence" value="ECO:0000314"/>
    <property type="project" value="NTNU_SB"/>
</dbReference>
<dbReference type="GO" id="GO:0003700">
    <property type="term" value="F:DNA-binding transcription factor activity"/>
    <property type="evidence" value="ECO:0000314"/>
    <property type="project" value="RGD"/>
</dbReference>
<dbReference type="GO" id="GO:0000981">
    <property type="term" value="F:DNA-binding transcription factor activity, RNA polymerase II-specific"/>
    <property type="evidence" value="ECO:0000318"/>
    <property type="project" value="GO_Central"/>
</dbReference>
<dbReference type="GO" id="GO:0003690">
    <property type="term" value="F:double-stranded DNA binding"/>
    <property type="evidence" value="ECO:0000314"/>
    <property type="project" value="RGD"/>
</dbReference>
<dbReference type="GO" id="GO:0000978">
    <property type="term" value="F:RNA polymerase II cis-regulatory region sequence-specific DNA binding"/>
    <property type="evidence" value="ECO:0000314"/>
    <property type="project" value="NTNU_SB"/>
</dbReference>
<dbReference type="GO" id="GO:1990837">
    <property type="term" value="F:sequence-specific double-stranded DNA binding"/>
    <property type="evidence" value="ECO:0000266"/>
    <property type="project" value="RGD"/>
</dbReference>
<dbReference type="GO" id="GO:0030154">
    <property type="term" value="P:cell differentiation"/>
    <property type="evidence" value="ECO:0000318"/>
    <property type="project" value="GO_Central"/>
</dbReference>
<dbReference type="GO" id="GO:0042711">
    <property type="term" value="P:maternal behavior"/>
    <property type="evidence" value="ECO:0000266"/>
    <property type="project" value="RGD"/>
</dbReference>
<dbReference type="GO" id="GO:0048665">
    <property type="term" value="P:neuron fate specification"/>
    <property type="evidence" value="ECO:0000266"/>
    <property type="project" value="RGD"/>
</dbReference>
<dbReference type="GO" id="GO:0042551">
    <property type="term" value="P:neuron maturation"/>
    <property type="evidence" value="ECO:0000266"/>
    <property type="project" value="RGD"/>
</dbReference>
<dbReference type="GO" id="GO:0045893">
    <property type="term" value="P:positive regulation of DNA-templated transcription"/>
    <property type="evidence" value="ECO:0000314"/>
    <property type="project" value="RGD"/>
</dbReference>
<dbReference type="GO" id="GO:0010628">
    <property type="term" value="P:positive regulation of gene expression"/>
    <property type="evidence" value="ECO:0000266"/>
    <property type="project" value="RGD"/>
</dbReference>
<dbReference type="GO" id="GO:0045944">
    <property type="term" value="P:positive regulation of transcription by RNA polymerase II"/>
    <property type="evidence" value="ECO:0000314"/>
    <property type="project" value="NTNU_SB"/>
</dbReference>
<dbReference type="GO" id="GO:0006357">
    <property type="term" value="P:regulation of transcription by RNA polymerase II"/>
    <property type="evidence" value="ECO:0000318"/>
    <property type="project" value="GO_Central"/>
</dbReference>
<dbReference type="FunFam" id="1.10.10.10:FF:000392">
    <property type="entry name" value="FEV, ETS transcription factor"/>
    <property type="match status" value="1"/>
</dbReference>
<dbReference type="Gene3D" id="1.10.10.10">
    <property type="entry name" value="Winged helix-like DNA-binding domain superfamily/Winged helix DNA-binding domain"/>
    <property type="match status" value="1"/>
</dbReference>
<dbReference type="InterPro" id="IPR000418">
    <property type="entry name" value="Ets_dom"/>
</dbReference>
<dbReference type="InterPro" id="IPR046328">
    <property type="entry name" value="ETS_fam"/>
</dbReference>
<dbReference type="InterPro" id="IPR036388">
    <property type="entry name" value="WH-like_DNA-bd_sf"/>
</dbReference>
<dbReference type="InterPro" id="IPR036390">
    <property type="entry name" value="WH_DNA-bd_sf"/>
</dbReference>
<dbReference type="PANTHER" id="PTHR11849">
    <property type="entry name" value="ETS"/>
    <property type="match status" value="1"/>
</dbReference>
<dbReference type="PANTHER" id="PTHR11849:SF203">
    <property type="entry name" value="PROTEIN FEV"/>
    <property type="match status" value="1"/>
</dbReference>
<dbReference type="Pfam" id="PF00178">
    <property type="entry name" value="Ets"/>
    <property type="match status" value="1"/>
</dbReference>
<dbReference type="PRINTS" id="PR00454">
    <property type="entry name" value="ETSDOMAIN"/>
</dbReference>
<dbReference type="SMART" id="SM00413">
    <property type="entry name" value="ETS"/>
    <property type="match status" value="1"/>
</dbReference>
<dbReference type="SUPFAM" id="SSF46785">
    <property type="entry name" value="Winged helix' DNA-binding domain"/>
    <property type="match status" value="1"/>
</dbReference>
<dbReference type="PROSITE" id="PS00345">
    <property type="entry name" value="ETS_DOMAIN_1"/>
    <property type="match status" value="1"/>
</dbReference>
<dbReference type="PROSITE" id="PS00346">
    <property type="entry name" value="ETS_DOMAIN_2"/>
    <property type="match status" value="1"/>
</dbReference>
<dbReference type="PROSITE" id="PS50061">
    <property type="entry name" value="ETS_DOMAIN_3"/>
    <property type="match status" value="1"/>
</dbReference>
<reference key="1">
    <citation type="journal article" date="1998" name="J. Neurobiol.">
        <title>Pet-1, a novel ETS domain factor that can activate neuronal nAchR gene transcription.</title>
        <authorList>
            <person name="Fyodorov D."/>
            <person name="Nelson T."/>
            <person name="Deneris E."/>
        </authorList>
    </citation>
    <scope>NUCLEOTIDE SEQUENCE [MRNA]</scope>
    <scope>FUNCTION</scope>
    <scope>TISSUE SPECIFICITY</scope>
    <source>
        <tissue>Pheochromocytoma</tissue>
    </source>
</reference>
<reference key="2">
    <citation type="journal article" date="1999" name="J. Neurosci.">
        <title>The ETS domain factor Pet-1 is an early and precise marker of central serotonin neurons and interacts with a conserved element in serotonergic genes.</title>
        <authorList>
            <person name="Hendricks T."/>
            <person name="Francis N."/>
            <person name="Fyodorov D."/>
            <person name="Deneris E.S."/>
        </authorList>
    </citation>
    <scope>FUNCTION</scope>
    <scope>TISSUE SPECIFICITY</scope>
    <scope>DEVELOPMENTAL STAGE</scope>
</reference>
<keyword id="KW-0217">Developmental protein</keyword>
<keyword id="KW-0221">Differentiation</keyword>
<keyword id="KW-0238">DNA-binding</keyword>
<keyword id="KW-0524">Neurogenesis</keyword>
<keyword id="KW-0539">Nucleus</keyword>
<keyword id="KW-1185">Reference proteome</keyword>
<keyword id="KW-0804">Transcription</keyword>
<keyword id="KW-0805">Transcription regulation</keyword>
<comment type="function">
    <text evidence="3 4">Functions as a transcriptional regulator. May function as a transcriptional repressor. Functions in the differentiation and the maintenance of the central serotonergic neurons. May play a role in cell growth.</text>
</comment>
<comment type="subcellular location">
    <subcellularLocation>
        <location evidence="2">Nucleus</location>
    </subcellularLocation>
</comment>
<comment type="tissue specificity">
    <text evidence="3 4">Specifically expressed in central serotonergic neurons. Also expressed in adrenal gland and to a lower extent in small intestine and eye.</text>
</comment>
<comment type="developmental stage">
    <text evidence="3">Earliest expression is detected at 12.5 dpc in the developing brain in regions corresponding to the future rostral and caudal serotonergic neuron clusters.</text>
</comment>
<comment type="similarity">
    <text evidence="5">Belongs to the ETS family.</text>
</comment>
<comment type="sequence caution" evidence="5">
    <conflict type="miscellaneous discrepancy">
        <sequence resource="EMBL-CDS" id="AAC12859"/>
    </conflict>
    <text>Contaminating sequence. Sequence of unknown origin in the N-terminal part.</text>
</comment>